<comment type="function">
    <text evidence="1">Regulates ciliary localization of the BBSome complex. Together with the BBSome complex, controls SMO ciliary trafficking and contributes to the sonic hedgehog (SHH) pathway regulation. May play a role in neurite outgrowth. May have tumor suppressor function (By similarity).</text>
</comment>
<comment type="subunit">
    <text evidence="1">Self-associates. Interacts with BBS9; the interaction mediates the association of LZTL1 with the BBsome complex and regulates BBSome ciliary trafficking (By similarity).</text>
</comment>
<comment type="subcellular location">
    <subcellularLocation>
        <location evidence="1">Cytoplasm</location>
    </subcellularLocation>
</comment>
<comment type="similarity">
    <text evidence="3">Belongs to the LZTFL1 family.</text>
</comment>
<comment type="sequence caution" evidence="3">
    <conflict type="erroneous initiation">
        <sequence resource="EMBL-CDS" id="BAE01165"/>
    </conflict>
    <text>Truncated N-terminus.</text>
</comment>
<gene>
    <name type="primary">LZTFL1</name>
    <name type="ORF">QtsA-17016</name>
</gene>
<feature type="chain" id="PRO_0000318759" description="Leucine zipper transcription factor-like protein 1">
    <location>
        <begin position="1"/>
        <end position="299"/>
    </location>
</feature>
<feature type="region of interest" description="Interaction with BSS9" evidence="1">
    <location>
        <begin position="145"/>
        <end position="299"/>
    </location>
</feature>
<feature type="coiled-coil region" evidence="2">
    <location>
        <begin position="88"/>
        <end position="296"/>
    </location>
</feature>
<keyword id="KW-0175">Coiled coil</keyword>
<keyword id="KW-0963">Cytoplasm</keyword>
<keyword id="KW-1185">Reference proteome</keyword>
<protein>
    <recommendedName>
        <fullName>Leucine zipper transcription factor-like protein 1</fullName>
    </recommendedName>
</protein>
<proteinExistence type="evidence at transcript level"/>
<organism>
    <name type="scientific">Macaca fascicularis</name>
    <name type="common">Crab-eating macaque</name>
    <name type="synonym">Cynomolgus monkey</name>
    <dbReference type="NCBI Taxonomy" id="9541"/>
    <lineage>
        <taxon>Eukaryota</taxon>
        <taxon>Metazoa</taxon>
        <taxon>Chordata</taxon>
        <taxon>Craniata</taxon>
        <taxon>Vertebrata</taxon>
        <taxon>Euteleostomi</taxon>
        <taxon>Mammalia</taxon>
        <taxon>Eutheria</taxon>
        <taxon>Euarchontoglires</taxon>
        <taxon>Primates</taxon>
        <taxon>Haplorrhini</taxon>
        <taxon>Catarrhini</taxon>
        <taxon>Cercopithecidae</taxon>
        <taxon>Cercopithecinae</taxon>
        <taxon>Macaca</taxon>
    </lineage>
</organism>
<sequence>MAELGLNEHHQNEYINYMRFARSKRGLRLKTVDSCFQDLKESRLVEETFTIDEVSEVLNGLQAVVHSEVESELINTAYTNVLLLRQLLAQAEKWYLKLQTDISELENRELLEQVAEFEKAEITSSNKKPILDITKPKLAPLNEGGTAELLNKEILRLQEENEKLKSRLKTIEIQATSALDEKSKLEKALQDLQLDQGNQKDFIKAQDLSNLENTVAALKSEFQKTLNDKTENQKSLEENLATAKHDLLRVQEQLHMAEKELEKKFQQTAAYRNMKEILTKKNDQIKDLRKRLAQYEPED</sequence>
<evidence type="ECO:0000250" key="1"/>
<evidence type="ECO:0000255" key="2"/>
<evidence type="ECO:0000305" key="3"/>
<accession>Q4R6V9</accession>
<dbReference type="EMBL" id="AB169071">
    <property type="protein sequence ID" value="BAE01165.1"/>
    <property type="status" value="ALT_INIT"/>
    <property type="molecule type" value="mRNA"/>
</dbReference>
<dbReference type="RefSeq" id="NP_001272105.1">
    <property type="nucleotide sequence ID" value="NM_001285176.1"/>
</dbReference>
<dbReference type="SMR" id="Q4R6V9"/>
<dbReference type="STRING" id="9541.ENSMFAP00000034709"/>
<dbReference type="eggNOG" id="ENOG502QRGB">
    <property type="taxonomic scope" value="Eukaryota"/>
</dbReference>
<dbReference type="Proteomes" id="UP000233100">
    <property type="component" value="Unplaced"/>
</dbReference>
<dbReference type="GO" id="GO:0005737">
    <property type="term" value="C:cytoplasm"/>
    <property type="evidence" value="ECO:0007669"/>
    <property type="project" value="UniProtKB-SubCell"/>
</dbReference>
<dbReference type="GO" id="GO:1903565">
    <property type="term" value="P:negative regulation of protein localization to cilium"/>
    <property type="evidence" value="ECO:0007669"/>
    <property type="project" value="TreeGrafter"/>
</dbReference>
<dbReference type="InterPro" id="IPR026157">
    <property type="entry name" value="LZTFL1"/>
</dbReference>
<dbReference type="PANTHER" id="PTHR21635">
    <property type="entry name" value="LEUCINE ZIPPER TRANSCRIPTION FACTOR LIKE"/>
    <property type="match status" value="1"/>
</dbReference>
<dbReference type="PANTHER" id="PTHR21635:SF0">
    <property type="entry name" value="LEUCINE ZIPPER TRANSCRIPTION FACTOR-LIKE PROTEIN 1"/>
    <property type="match status" value="1"/>
</dbReference>
<dbReference type="Pfam" id="PF15294">
    <property type="entry name" value="Leu_zip"/>
    <property type="match status" value="1"/>
</dbReference>
<name>LZTL1_MACFA</name>
<reference key="1">
    <citation type="submission" date="2005-06" db="EMBL/GenBank/DDBJ databases">
        <title>DNA sequences of macaque genes expressed in brain or testis and its evolutionary implications.</title>
        <authorList>
            <consortium name="International consortium for macaque cDNA sequencing and analysis"/>
        </authorList>
    </citation>
    <scope>NUCLEOTIDE SEQUENCE [LARGE SCALE MRNA] OF 14-299</scope>
    <source>
        <tissue>Testis</tissue>
    </source>
</reference>